<protein>
    <recommendedName>
        <fullName evidence="1">Sigma factor-binding protein Crl</fullName>
    </recommendedName>
</protein>
<feature type="chain" id="PRO_1000085442" description="Sigma factor-binding protein Crl">
    <location>
        <begin position="1"/>
        <end position="133"/>
    </location>
</feature>
<feature type="region of interest" description="Essential for activity" evidence="1">
    <location>
        <begin position="99"/>
        <end position="122"/>
    </location>
</feature>
<feature type="coiled-coil region" evidence="1">
    <location>
        <begin position="90"/>
        <end position="116"/>
    </location>
</feature>
<name>CRL_ECOLC</name>
<gene>
    <name evidence="1" type="primary">crl</name>
    <name type="ordered locus">EcolC_3341</name>
</gene>
<dbReference type="EMBL" id="CP000946">
    <property type="protein sequence ID" value="ACA78962.1"/>
    <property type="molecule type" value="Genomic_DNA"/>
</dbReference>
<dbReference type="RefSeq" id="WP_000174677.1">
    <property type="nucleotide sequence ID" value="NZ_MTFT01000010.1"/>
</dbReference>
<dbReference type="EMDB" id="EMD-0700"/>
<dbReference type="SMR" id="B1J0Z4"/>
<dbReference type="GeneID" id="93777153"/>
<dbReference type="KEGG" id="ecl:EcolC_3341"/>
<dbReference type="HOGENOM" id="CLU_136773_0_0_6"/>
<dbReference type="GO" id="GO:0005737">
    <property type="term" value="C:cytoplasm"/>
    <property type="evidence" value="ECO:0007669"/>
    <property type="project" value="UniProtKB-SubCell"/>
</dbReference>
<dbReference type="GO" id="GO:0045893">
    <property type="term" value="P:positive regulation of DNA-templated transcription"/>
    <property type="evidence" value="ECO:0007669"/>
    <property type="project" value="UniProtKB-UniRule"/>
</dbReference>
<dbReference type="FunFam" id="3.30.310.230:FF:000001">
    <property type="entry name" value="Sigma factor-binding protein Crl"/>
    <property type="match status" value="1"/>
</dbReference>
<dbReference type="Gene3D" id="3.30.310.230">
    <property type="entry name" value="Sigma factor-binding protein Crl monomer"/>
    <property type="match status" value="1"/>
</dbReference>
<dbReference type="HAMAP" id="MF_01178">
    <property type="entry name" value="Crl"/>
    <property type="match status" value="1"/>
</dbReference>
<dbReference type="InterPro" id="IPR009986">
    <property type="entry name" value="Tscrpt_reg_Crl"/>
</dbReference>
<dbReference type="InterPro" id="IPR038208">
    <property type="entry name" value="Tscrpt_reg_Crl_sf"/>
</dbReference>
<dbReference type="NCBIfam" id="NF008217">
    <property type="entry name" value="PRK10984.1"/>
    <property type="match status" value="1"/>
</dbReference>
<dbReference type="Pfam" id="PF07417">
    <property type="entry name" value="Crl"/>
    <property type="match status" value="1"/>
</dbReference>
<reference key="1">
    <citation type="submission" date="2008-02" db="EMBL/GenBank/DDBJ databases">
        <title>Complete sequence of Escherichia coli C str. ATCC 8739.</title>
        <authorList>
            <person name="Copeland A."/>
            <person name="Lucas S."/>
            <person name="Lapidus A."/>
            <person name="Glavina del Rio T."/>
            <person name="Dalin E."/>
            <person name="Tice H."/>
            <person name="Bruce D."/>
            <person name="Goodwin L."/>
            <person name="Pitluck S."/>
            <person name="Kiss H."/>
            <person name="Brettin T."/>
            <person name="Detter J.C."/>
            <person name="Han C."/>
            <person name="Kuske C.R."/>
            <person name="Schmutz J."/>
            <person name="Larimer F."/>
            <person name="Land M."/>
            <person name="Hauser L."/>
            <person name="Kyrpides N."/>
            <person name="Mikhailova N."/>
            <person name="Ingram L."/>
            <person name="Richardson P."/>
        </authorList>
    </citation>
    <scope>NUCLEOTIDE SEQUENCE [LARGE SCALE GENOMIC DNA]</scope>
    <source>
        <strain>ATCC 8739 / DSM 1576 / NBRC 3972 / NCIMB 8545 / WDCM 00012 / Crooks</strain>
    </source>
</reference>
<sequence length="133" mass="15656">MTLPSGHPKSRLIKKFTALGPYIREGKCEDNRFFFDCLAVCVNVKPAPEVREFWGWWMELEAQESRFTYSYQFGLFDKAGDWKSVPVKDTEVVERLEHTLREFHEKLRELLTTLNLKLEPADDFRDEPVKLTA</sequence>
<accession>B1J0Z4</accession>
<keyword id="KW-0010">Activator</keyword>
<keyword id="KW-0175">Coiled coil</keyword>
<keyword id="KW-0963">Cytoplasm</keyword>
<keyword id="KW-0804">Transcription</keyword>
<keyword id="KW-0805">Transcription regulation</keyword>
<proteinExistence type="inferred from homology"/>
<organism>
    <name type="scientific">Escherichia coli (strain ATCC 8739 / DSM 1576 / NBRC 3972 / NCIMB 8545 / WDCM 00012 / Crooks)</name>
    <dbReference type="NCBI Taxonomy" id="481805"/>
    <lineage>
        <taxon>Bacteria</taxon>
        <taxon>Pseudomonadati</taxon>
        <taxon>Pseudomonadota</taxon>
        <taxon>Gammaproteobacteria</taxon>
        <taxon>Enterobacterales</taxon>
        <taxon>Enterobacteriaceae</taxon>
        <taxon>Escherichia</taxon>
    </lineage>
</organism>
<comment type="function">
    <text evidence="1">Binds to the sigma-S subunit of RNA polymerase, activating expression of sigma-S-regulated genes. Stimulates RNA polymerase holoenzyme formation and may bind to several other sigma factors, such as sigma-70 and sigma-32.</text>
</comment>
<comment type="subcellular location">
    <subcellularLocation>
        <location evidence="1">Cytoplasm</location>
    </subcellularLocation>
</comment>
<comment type="similarity">
    <text evidence="1">Belongs to the Crl family.</text>
</comment>
<evidence type="ECO:0000255" key="1">
    <source>
        <dbReference type="HAMAP-Rule" id="MF_01178"/>
    </source>
</evidence>